<sequence length="194" mass="21820">MRKAERARKTNETDIKLSFHIDGEGKADIQTDVPFMTHMLDLFTKHGQFDLSIEAKGDVEIDDHHTTEDIGICLGQALLEALGDKQGIKRYGSSMVPMDEALAQVAIDLSNRPHLEFRAEFPSRKIGTFDTELVHEFLWKFALEARMNLHVIVHYGTNTHHMIEAIFKALGRALDEAALIDPRVKGIPSTKGML</sequence>
<dbReference type="EC" id="4.2.1.19" evidence="1"/>
<dbReference type="EMBL" id="AE017333">
    <property type="protein sequence ID" value="AAU42554.1"/>
    <property type="molecule type" value="Genomic_DNA"/>
</dbReference>
<dbReference type="EMBL" id="CP000002">
    <property type="protein sequence ID" value="AAU25183.1"/>
    <property type="molecule type" value="Genomic_DNA"/>
</dbReference>
<dbReference type="RefSeq" id="WP_003185604.1">
    <property type="nucleotide sequence ID" value="NC_006322.1"/>
</dbReference>
<dbReference type="SMR" id="Q65EG0"/>
<dbReference type="STRING" id="279010.BL03409"/>
<dbReference type="GeneID" id="92859687"/>
<dbReference type="KEGG" id="bld:BLi03735"/>
<dbReference type="KEGG" id="bli:BL03409"/>
<dbReference type="eggNOG" id="COG0131">
    <property type="taxonomic scope" value="Bacteria"/>
</dbReference>
<dbReference type="HOGENOM" id="CLU_044308_2_0_9"/>
<dbReference type="UniPathway" id="UPA00031">
    <property type="reaction ID" value="UER00011"/>
</dbReference>
<dbReference type="Proteomes" id="UP000000606">
    <property type="component" value="Chromosome"/>
</dbReference>
<dbReference type="GO" id="GO:0005737">
    <property type="term" value="C:cytoplasm"/>
    <property type="evidence" value="ECO:0007669"/>
    <property type="project" value="UniProtKB-SubCell"/>
</dbReference>
<dbReference type="GO" id="GO:0004424">
    <property type="term" value="F:imidazoleglycerol-phosphate dehydratase activity"/>
    <property type="evidence" value="ECO:0007669"/>
    <property type="project" value="UniProtKB-UniRule"/>
</dbReference>
<dbReference type="GO" id="GO:0000105">
    <property type="term" value="P:L-histidine biosynthetic process"/>
    <property type="evidence" value="ECO:0007669"/>
    <property type="project" value="UniProtKB-UniRule"/>
</dbReference>
<dbReference type="CDD" id="cd07914">
    <property type="entry name" value="IGPD"/>
    <property type="match status" value="1"/>
</dbReference>
<dbReference type="FunFam" id="3.30.230.40:FF:000001">
    <property type="entry name" value="Imidazoleglycerol-phosphate dehydratase HisB"/>
    <property type="match status" value="1"/>
</dbReference>
<dbReference type="FunFam" id="3.30.230.40:FF:000003">
    <property type="entry name" value="Imidazoleglycerol-phosphate dehydratase HisB"/>
    <property type="match status" value="1"/>
</dbReference>
<dbReference type="Gene3D" id="3.30.230.40">
    <property type="entry name" value="Imidazole glycerol phosphate dehydratase, domain 1"/>
    <property type="match status" value="2"/>
</dbReference>
<dbReference type="HAMAP" id="MF_00076">
    <property type="entry name" value="HisB"/>
    <property type="match status" value="1"/>
</dbReference>
<dbReference type="InterPro" id="IPR038494">
    <property type="entry name" value="IGPD_sf"/>
</dbReference>
<dbReference type="InterPro" id="IPR000807">
    <property type="entry name" value="ImidazoleglycerolP_deHydtase"/>
</dbReference>
<dbReference type="InterPro" id="IPR020565">
    <property type="entry name" value="ImidazoleglycerP_deHydtase_CS"/>
</dbReference>
<dbReference type="InterPro" id="IPR020568">
    <property type="entry name" value="Ribosomal_Su5_D2-typ_SF"/>
</dbReference>
<dbReference type="NCBIfam" id="NF002111">
    <property type="entry name" value="PRK00951.2-1"/>
    <property type="match status" value="1"/>
</dbReference>
<dbReference type="NCBIfam" id="NF002114">
    <property type="entry name" value="PRK00951.2-4"/>
    <property type="match status" value="1"/>
</dbReference>
<dbReference type="NCBIfam" id="NF002115">
    <property type="entry name" value="PRK00951.2-5"/>
    <property type="match status" value="1"/>
</dbReference>
<dbReference type="PANTHER" id="PTHR23133:SF2">
    <property type="entry name" value="IMIDAZOLEGLYCEROL-PHOSPHATE DEHYDRATASE"/>
    <property type="match status" value="1"/>
</dbReference>
<dbReference type="PANTHER" id="PTHR23133">
    <property type="entry name" value="IMIDAZOLEGLYCEROL-PHOSPHATE DEHYDRATASE HIS7"/>
    <property type="match status" value="1"/>
</dbReference>
<dbReference type="Pfam" id="PF00475">
    <property type="entry name" value="IGPD"/>
    <property type="match status" value="1"/>
</dbReference>
<dbReference type="SUPFAM" id="SSF54211">
    <property type="entry name" value="Ribosomal protein S5 domain 2-like"/>
    <property type="match status" value="2"/>
</dbReference>
<dbReference type="PROSITE" id="PS00954">
    <property type="entry name" value="IGP_DEHYDRATASE_1"/>
    <property type="match status" value="1"/>
</dbReference>
<dbReference type="PROSITE" id="PS00955">
    <property type="entry name" value="IGP_DEHYDRATASE_2"/>
    <property type="match status" value="1"/>
</dbReference>
<protein>
    <recommendedName>
        <fullName evidence="1">Imidazoleglycerol-phosphate dehydratase</fullName>
        <shortName evidence="1">IGPD</shortName>
        <ecNumber evidence="1">4.2.1.19</ecNumber>
    </recommendedName>
</protein>
<comment type="catalytic activity">
    <reaction evidence="1">
        <text>D-erythro-1-(imidazol-4-yl)glycerol 3-phosphate = 3-(imidazol-4-yl)-2-oxopropyl phosphate + H2O</text>
        <dbReference type="Rhea" id="RHEA:11040"/>
        <dbReference type="ChEBI" id="CHEBI:15377"/>
        <dbReference type="ChEBI" id="CHEBI:57766"/>
        <dbReference type="ChEBI" id="CHEBI:58278"/>
        <dbReference type="EC" id="4.2.1.19"/>
    </reaction>
</comment>
<comment type="pathway">
    <text evidence="1">Amino-acid biosynthesis; L-histidine biosynthesis; L-histidine from 5-phospho-alpha-D-ribose 1-diphosphate: step 6/9.</text>
</comment>
<comment type="subcellular location">
    <subcellularLocation>
        <location evidence="1">Cytoplasm</location>
    </subcellularLocation>
</comment>
<comment type="similarity">
    <text evidence="1">Belongs to the imidazoleglycerol-phosphate dehydratase family.</text>
</comment>
<organism>
    <name type="scientific">Bacillus licheniformis (strain ATCC 14580 / DSM 13 / JCM 2505 / CCUG 7422 / NBRC 12200 / NCIMB 9375 / NCTC 10341 / NRRL NRS-1264 / Gibson 46)</name>
    <dbReference type="NCBI Taxonomy" id="279010"/>
    <lineage>
        <taxon>Bacteria</taxon>
        <taxon>Bacillati</taxon>
        <taxon>Bacillota</taxon>
        <taxon>Bacilli</taxon>
        <taxon>Bacillales</taxon>
        <taxon>Bacillaceae</taxon>
        <taxon>Bacillus</taxon>
    </lineage>
</organism>
<keyword id="KW-0028">Amino-acid biosynthesis</keyword>
<keyword id="KW-0963">Cytoplasm</keyword>
<keyword id="KW-0368">Histidine biosynthesis</keyword>
<keyword id="KW-0456">Lyase</keyword>
<keyword id="KW-1185">Reference proteome</keyword>
<name>HIS7_BACLD</name>
<feature type="chain" id="PRO_0000158108" description="Imidazoleglycerol-phosphate dehydratase">
    <location>
        <begin position="1"/>
        <end position="194"/>
    </location>
</feature>
<evidence type="ECO:0000255" key="1">
    <source>
        <dbReference type="HAMAP-Rule" id="MF_00076"/>
    </source>
</evidence>
<reference key="1">
    <citation type="journal article" date="2004" name="J. Mol. Microbiol. Biotechnol.">
        <title>The complete genome sequence of Bacillus licheniformis DSM13, an organism with great industrial potential.</title>
        <authorList>
            <person name="Veith B."/>
            <person name="Herzberg C."/>
            <person name="Steckel S."/>
            <person name="Feesche J."/>
            <person name="Maurer K.H."/>
            <person name="Ehrenreich P."/>
            <person name="Baeumer S."/>
            <person name="Henne A."/>
            <person name="Liesegang H."/>
            <person name="Merkl R."/>
            <person name="Ehrenreich A."/>
            <person name="Gottschalk G."/>
        </authorList>
    </citation>
    <scope>NUCLEOTIDE SEQUENCE [LARGE SCALE GENOMIC DNA]</scope>
    <source>
        <strain>ATCC 14580 / DSM 13 / JCM 2505 / CCUG 7422 / NBRC 12200 / NCIMB 9375 / NCTC 10341 / NRRL NRS-1264 / Gibson 46</strain>
    </source>
</reference>
<reference key="2">
    <citation type="journal article" date="2004" name="Genome Biol.">
        <title>Complete genome sequence of the industrial bacterium Bacillus licheniformis and comparisons with closely related Bacillus species.</title>
        <authorList>
            <person name="Rey M.W."/>
            <person name="Ramaiya P."/>
            <person name="Nelson B.A."/>
            <person name="Brody-Karpin S.D."/>
            <person name="Zaretsky E.J."/>
            <person name="Tang M."/>
            <person name="Lopez de Leon A."/>
            <person name="Xiang H."/>
            <person name="Gusti V."/>
            <person name="Clausen I.G."/>
            <person name="Olsen P.B."/>
            <person name="Rasmussen M.D."/>
            <person name="Andersen J.T."/>
            <person name="Joergensen P.L."/>
            <person name="Larsen T.S."/>
            <person name="Sorokin A."/>
            <person name="Bolotin A."/>
            <person name="Lapidus A."/>
            <person name="Galleron N."/>
            <person name="Ehrlich S.D."/>
            <person name="Berka R.M."/>
        </authorList>
    </citation>
    <scope>NUCLEOTIDE SEQUENCE [LARGE SCALE GENOMIC DNA]</scope>
    <source>
        <strain>ATCC 14580 / DSM 13 / JCM 2505 / CCUG 7422 / NBRC 12200 / NCIMB 9375 / NCTC 10341 / NRRL NRS-1264 / Gibson 46</strain>
    </source>
</reference>
<proteinExistence type="inferred from homology"/>
<gene>
    <name evidence="1" type="primary">hisB</name>
    <name type="ordered locus">BLi03735</name>
    <name type="ordered locus">BL03409</name>
</gene>
<accession>Q65EG0</accession>
<accession>Q62PX8</accession>